<comment type="function">
    <text evidence="1">Catalyzes the irreversible reduction of 2,3-butanediol to (S)-acetoin in the presence of NADH.</text>
</comment>
<comment type="catalytic activity">
    <reaction>
        <text>(S)-acetoin + NAD(+) = diacetyl + NADH + H(+)</text>
        <dbReference type="Rhea" id="RHEA:27286"/>
        <dbReference type="ChEBI" id="CHEBI:15378"/>
        <dbReference type="ChEBI" id="CHEBI:15687"/>
        <dbReference type="ChEBI" id="CHEBI:16583"/>
        <dbReference type="ChEBI" id="CHEBI:57540"/>
        <dbReference type="ChEBI" id="CHEBI:57945"/>
        <dbReference type="EC" id="1.1.1.304"/>
    </reaction>
</comment>
<comment type="similarity">
    <text evidence="3">Belongs to the short-chain dehydrogenases/reductases (SDR) family.</text>
</comment>
<accession>P66776</accession>
<accession>Q99X89</accession>
<dbReference type="EC" id="1.1.1.304"/>
<dbReference type="EMBL" id="BA000033">
    <property type="protein sequence ID" value="BAB93965.1"/>
    <property type="molecule type" value="Genomic_DNA"/>
</dbReference>
<dbReference type="RefSeq" id="WP_000183771.1">
    <property type="nucleotide sequence ID" value="NC_003923.1"/>
</dbReference>
<dbReference type="SMR" id="P66776"/>
<dbReference type="KEGG" id="sam:MW0100"/>
<dbReference type="HOGENOM" id="CLU_010194_1_0_9"/>
<dbReference type="GO" id="GO:0052588">
    <property type="term" value="F:diacetyl reductase ((S)-acetoin forming) (NAD+) activity"/>
    <property type="evidence" value="ECO:0007669"/>
    <property type="project" value="UniProtKB-EC"/>
</dbReference>
<dbReference type="GO" id="GO:0045150">
    <property type="term" value="P:acetoin catabolic process"/>
    <property type="evidence" value="ECO:0007669"/>
    <property type="project" value="InterPro"/>
</dbReference>
<dbReference type="CDD" id="cd05366">
    <property type="entry name" value="meso-BDH-like_SDR_c"/>
    <property type="match status" value="1"/>
</dbReference>
<dbReference type="FunFam" id="3.40.50.720:FF:000084">
    <property type="entry name" value="Short-chain dehydrogenase reductase"/>
    <property type="match status" value="1"/>
</dbReference>
<dbReference type="Gene3D" id="3.40.50.720">
    <property type="entry name" value="NAD(P)-binding Rossmann-like Domain"/>
    <property type="match status" value="1"/>
</dbReference>
<dbReference type="InterPro" id="IPR014007">
    <property type="entry name" value="23BDH"/>
</dbReference>
<dbReference type="InterPro" id="IPR036291">
    <property type="entry name" value="NAD(P)-bd_dom_sf"/>
</dbReference>
<dbReference type="InterPro" id="IPR020904">
    <property type="entry name" value="Sc_DH/Rdtase_CS"/>
</dbReference>
<dbReference type="InterPro" id="IPR002347">
    <property type="entry name" value="SDR_fam"/>
</dbReference>
<dbReference type="NCBIfam" id="TIGR02415">
    <property type="entry name" value="23BDH"/>
    <property type="match status" value="1"/>
</dbReference>
<dbReference type="NCBIfam" id="NF005559">
    <property type="entry name" value="PRK07231.1"/>
    <property type="match status" value="1"/>
</dbReference>
<dbReference type="NCBIfam" id="NF006394">
    <property type="entry name" value="PRK08643.1"/>
    <property type="match status" value="1"/>
</dbReference>
<dbReference type="PANTHER" id="PTHR43639">
    <property type="entry name" value="OXIDOREDUCTASE, SHORT-CHAIN DEHYDROGENASE/REDUCTASE FAMILY (AFU_ORTHOLOGUE AFUA_5G02870)"/>
    <property type="match status" value="1"/>
</dbReference>
<dbReference type="PANTHER" id="PTHR43639:SF1">
    <property type="entry name" value="SHORT-CHAIN DEHYDROGENASE_REDUCTASE FAMILY PROTEIN"/>
    <property type="match status" value="1"/>
</dbReference>
<dbReference type="Pfam" id="PF00106">
    <property type="entry name" value="adh_short"/>
    <property type="match status" value="1"/>
</dbReference>
<dbReference type="PRINTS" id="PR00081">
    <property type="entry name" value="GDHRDH"/>
</dbReference>
<dbReference type="PRINTS" id="PR00080">
    <property type="entry name" value="SDRFAMILY"/>
</dbReference>
<dbReference type="SMART" id="SM00822">
    <property type="entry name" value="PKS_KR"/>
    <property type="match status" value="1"/>
</dbReference>
<dbReference type="SUPFAM" id="SSF51735">
    <property type="entry name" value="NAD(P)-binding Rossmann-fold domains"/>
    <property type="match status" value="1"/>
</dbReference>
<dbReference type="PROSITE" id="PS00061">
    <property type="entry name" value="ADH_SHORT"/>
    <property type="match status" value="1"/>
</dbReference>
<reference key="1">
    <citation type="journal article" date="2002" name="Lancet">
        <title>Genome and virulence determinants of high virulence community-acquired MRSA.</title>
        <authorList>
            <person name="Baba T."/>
            <person name="Takeuchi F."/>
            <person name="Kuroda M."/>
            <person name="Yuzawa H."/>
            <person name="Aoki K."/>
            <person name="Oguchi A."/>
            <person name="Nagai Y."/>
            <person name="Iwama N."/>
            <person name="Asano K."/>
            <person name="Naimi T."/>
            <person name="Kuroda H."/>
            <person name="Cui L."/>
            <person name="Yamamoto K."/>
            <person name="Hiramatsu K."/>
        </authorList>
    </citation>
    <scope>NUCLEOTIDE SEQUENCE [LARGE SCALE GENOMIC DNA]</scope>
    <source>
        <strain>MW2</strain>
    </source>
</reference>
<evidence type="ECO:0000250" key="1"/>
<evidence type="ECO:0000255" key="2">
    <source>
        <dbReference type="PROSITE-ProRule" id="PRU10001"/>
    </source>
</evidence>
<evidence type="ECO:0000305" key="3"/>
<feature type="chain" id="PRO_0000054544" description="Diacetyl reductase [(S)-acetoin forming]">
    <location>
        <begin position="1"/>
        <end position="258"/>
    </location>
</feature>
<feature type="active site" description="Proton acceptor" evidence="2">
    <location>
        <position position="154"/>
    </location>
</feature>
<feature type="active site" evidence="1">
    <location>
        <position position="158"/>
    </location>
</feature>
<feature type="binding site" evidence="1">
    <location>
        <begin position="8"/>
        <end position="32"/>
    </location>
    <ligand>
        <name>NAD(+)</name>
        <dbReference type="ChEBI" id="CHEBI:57540"/>
    </ligand>
</feature>
<feature type="binding site" evidence="1">
    <location>
        <position position="141"/>
    </location>
    <ligand>
        <name>substrate</name>
    </ligand>
</feature>
<keyword id="KW-0520">NAD</keyword>
<keyword id="KW-0560">Oxidoreductase</keyword>
<name>BUTA_STAAW</name>
<organism>
    <name type="scientific">Staphylococcus aureus (strain MW2)</name>
    <dbReference type="NCBI Taxonomy" id="196620"/>
    <lineage>
        <taxon>Bacteria</taxon>
        <taxon>Bacillati</taxon>
        <taxon>Bacillota</taxon>
        <taxon>Bacilli</taxon>
        <taxon>Bacillales</taxon>
        <taxon>Staphylococcaceae</taxon>
        <taxon>Staphylococcus</taxon>
    </lineage>
</organism>
<proteinExistence type="inferred from homology"/>
<sequence>MTNNKVALVTGGAQGIGFKIAERLVEDGFKVAVVDFNEEGAKAAALKLSSDGTKAIAIKADVSNRDDVFNAVRQTAAQFGDFHVMVNNAGLGPTTPIDTITEEQFKTVYGVNVAGVLWGIQAAHEQFKKFNHGGKIINATSQAGVEGNPGLSLYCSTKFAVRGLTQVAAQDLASEGITVNAFAPGIVQTPMMESIAVATAEEAGKPEAWGWEQFTSQIALGRVSQPEDVSNVVSFLAGKDSDYITGQTIIVDGGMRFR</sequence>
<protein>
    <recommendedName>
        <fullName>Diacetyl reductase [(S)-acetoin forming]</fullName>
        <ecNumber>1.1.1.304</ecNumber>
    </recommendedName>
    <alternativeName>
        <fullName>Acetoin(diacetyl) reductase</fullName>
        <shortName>AR</shortName>
    </alternativeName>
    <alternativeName>
        <fullName>Meso-2,3-butanediol dehydrogenase</fullName>
    </alternativeName>
</protein>
<gene>
    <name type="primary">butA</name>
    <name type="ordered locus">MW0100</name>
</gene>